<name>GRIK2_XENLA</name>
<reference evidence="7" key="1">
    <citation type="journal article" date="2016" name="Nature">
        <title>Genome evolution in the allotetraploid frog Xenopus laevis.</title>
        <authorList>
            <person name="Session A.M."/>
            <person name="Uno Y."/>
            <person name="Kwon T."/>
            <person name="Chapman J.A."/>
            <person name="Toyoda A."/>
            <person name="Takahashi S."/>
            <person name="Fukui A."/>
            <person name="Hikosaka A."/>
            <person name="Suzuki A."/>
            <person name="Kondo M."/>
            <person name="van Heeringen S.J."/>
            <person name="Quigley I."/>
            <person name="Heinz S."/>
            <person name="Ogino H."/>
            <person name="Ochi H."/>
            <person name="Hellsten U."/>
            <person name="Lyons J.B."/>
            <person name="Simakov O."/>
            <person name="Putnam N."/>
            <person name="Stites J."/>
            <person name="Kuroki Y."/>
            <person name="Tanaka T."/>
            <person name="Michiue T."/>
            <person name="Watanabe M."/>
            <person name="Bogdanovic O."/>
            <person name="Lister R."/>
            <person name="Georgiou G."/>
            <person name="Paranjpe S.S."/>
            <person name="van Kruijsbergen I."/>
            <person name="Shu S."/>
            <person name="Carlson J."/>
            <person name="Kinoshita T."/>
            <person name="Ohta Y."/>
            <person name="Mawaribuchi S."/>
            <person name="Jenkins J."/>
            <person name="Grimwood J."/>
            <person name="Schmutz J."/>
            <person name="Mitros T."/>
            <person name="Mozaffari S.V."/>
            <person name="Suzuki Y."/>
            <person name="Haramoto Y."/>
            <person name="Yamamoto T.S."/>
            <person name="Takagi C."/>
            <person name="Heald R."/>
            <person name="Miller K."/>
            <person name="Haudenschild C."/>
            <person name="Kitzman J."/>
            <person name="Nakayama T."/>
            <person name="Izutsu Y."/>
            <person name="Robert J."/>
            <person name="Fortriede J."/>
            <person name="Burns K."/>
            <person name="Lotay V."/>
            <person name="Karimi K."/>
            <person name="Yasuoka Y."/>
            <person name="Dichmann D.S."/>
            <person name="Flajnik M.F."/>
            <person name="Houston D.W."/>
            <person name="Shendure J."/>
            <person name="DuPasquier L."/>
            <person name="Vize P.D."/>
            <person name="Zorn A.M."/>
            <person name="Ito M."/>
            <person name="Marcotte E.M."/>
            <person name="Wallingford J.B."/>
            <person name="Ito Y."/>
            <person name="Asashima M."/>
            <person name="Ueno N."/>
            <person name="Matsuda Y."/>
            <person name="Veenstra G.J."/>
            <person name="Fujiyama A."/>
            <person name="Harland R.M."/>
            <person name="Taira M."/>
            <person name="Rokhsar D.S."/>
        </authorList>
    </citation>
    <scope>NUCLEOTIDE SEQUENCE [LARGE SCALE GENOMIC DNA]</scope>
    <source>
        <strain evidence="7">J</strain>
    </source>
</reference>
<reference key="2">
    <citation type="journal article" date="1996" name="Recept. Channels">
        <title>A unitary non-NMDA receptor short subunit from Xenopus: DNA cloning and expression.</title>
        <authorList>
            <person name="Ishimaru H."/>
            <person name="Kamboj R."/>
            <person name="Ambrosini A."/>
            <person name="Henley J.M."/>
            <person name="Soloviev M.M."/>
            <person name="Sudan H."/>
            <person name="Rossier J."/>
            <person name="Abutidze K."/>
            <person name="Rampersad V."/>
            <person name="Usherwood P.N.R."/>
            <person name="Bateson A.N."/>
            <person name="Barnard E.A."/>
        </authorList>
    </citation>
    <scope>NUCLEOTIDE SEQUENCE [MRNA] OF 629-913</scope>
    <source>
        <tissue>Brain</tissue>
    </source>
</reference>
<sequence>MCAGTMKIISPSLTNSFFRCTLRFVACLFWIGYSQGTTHVLRFGGIFESVESGPSGAEELAFRFAVNTINRNRTLLPNTTITYDTQRINLYDSFEASRKACEQLSLGVAAIFGPSHSSSANAVQSICNALGVPHIQTRWKHQVSDNKDSFYVSLYPDFSSLSRAILDLVQFFKWKTVTIAYDDSTGLIRLQELIKAPSRYNLRLKIRQLPIDTKDAKPLLKEMKRGKEFHVIFDCSHDMAAGILKQALAMGMMTEYYHYIFTTLDLFALDVEPYRYSGVNMTGFRILNIENSQVLSIIEKWSMERLQAPPKPDSGLLDGFMTTDAALMYDAVHVASVAVQQFPQMTVSSLQCNRHKPWRFGARFINLIKEAHWEGLTGRITFNKTNGLRTDFDLDVISLKEEGLEKIGTWDPTSGLNMTDNQKGKPANITDSLSNRSLIVTTILEEPYVMFKKSDKPLYGKARFEGYCIDLLEKLSRILGFEYEVRLVEDGKYGAKDDSTQQWNGMVRELMDHKADLAVAPLAITYVREQVIDFTKPFMTLGIGILYRKPNGTNPGVFSFLNPLSPDIWMYILLAYLGVSCVLFVIARFSPYEWYNPHPCNPDSDVVENNFTLLNSFWFGVGALMQQGSELMPKALSTRIVGGIWWFFTLIIISSYTANLAAFLTVERMESPIDSADDLAKQTKIEYGAVQDGATMTFFKKSRIPTYEKMWAFMNSRSQSVLVKNNEEGIQRALTSDYAFLMESTTIEFVTQRNCNLTQIGGLIDSKGYGVGTPMGSPYRDKITIAILQLQEEGVLHMMKEKWWRGNGCPEEESKEASALGVQNIGGIFIVLAAGLVLSVFVAVGEFLYKSKKNAQLEKRSFCSAMVEELRMSLKCQRRLKHKPQPPVIVKTEEVINMHTFNDRRLPGKETMA</sequence>
<comment type="function">
    <text evidence="3">Ionotropic glutamate receptor that functions as a cation-permeable ligand-gated ion channel, gated by L-glutamate and the glutamatergic agonist kainic acid. L-glutamate acts as an excitatory neurotransmitter at many synapses in the central nervous system. Binding of the excitatory neurotransmitter L-glutamate induces a conformation change, leading to the opening of the cation channel, and thereby converts the chemical signal to an electrical impulse. The receptor then desensitizes rapidly and enters a transient inactive state, characterized by the presence of bound agonist.</text>
</comment>
<comment type="function">
    <text evidence="1">Independent of its ionotropic glutamate receptor activity, acts as a thermoreceptor conferring sensitivity to cold temperatures (By similarity). Functions in dorsal root ganglion neurons (By similarity).</text>
</comment>
<comment type="catalytic activity">
    <reaction evidence="3">
        <text>Ca(2+)(in) = Ca(2+)(out)</text>
        <dbReference type="Rhea" id="RHEA:29671"/>
        <dbReference type="ChEBI" id="CHEBI:29108"/>
    </reaction>
</comment>
<comment type="catalytic activity">
    <reaction evidence="3">
        <text>Na(+)(in) = Na(+)(out)</text>
        <dbReference type="Rhea" id="RHEA:34963"/>
        <dbReference type="ChEBI" id="CHEBI:29101"/>
    </reaction>
</comment>
<comment type="activity regulation">
    <text evidence="1">Cold receptor activity activated by temperatures between 10-19 degrees Celsius.</text>
</comment>
<comment type="subunit">
    <text evidence="2">Homotetramer and heterotetramer with GRIK5. Tetramers may be formed by the dimerization of dimers.</text>
</comment>
<comment type="subcellular location">
    <subcellularLocation>
        <location evidence="2">Cell membrane</location>
        <topology evidence="4">Multi-pass membrane protein</topology>
    </subcellularLocation>
    <subcellularLocation>
        <location evidence="2">Postsynaptic cell membrane</location>
        <topology evidence="4">Multi-pass membrane protein</topology>
    </subcellularLocation>
</comment>
<comment type="similarity">
    <text evidence="6">Belongs to the glutamate-gated ion channel (TC 1.A.10.1) family. GRIK2 subfamily.</text>
</comment>
<organism>
    <name type="scientific">Xenopus laevis</name>
    <name type="common">African clawed frog</name>
    <dbReference type="NCBI Taxonomy" id="8355"/>
    <lineage>
        <taxon>Eukaryota</taxon>
        <taxon>Metazoa</taxon>
        <taxon>Chordata</taxon>
        <taxon>Craniata</taxon>
        <taxon>Vertebrata</taxon>
        <taxon>Euteleostomi</taxon>
        <taxon>Amphibia</taxon>
        <taxon>Batrachia</taxon>
        <taxon>Anura</taxon>
        <taxon>Pipoidea</taxon>
        <taxon>Pipidae</taxon>
        <taxon>Xenopodinae</taxon>
        <taxon>Xenopus</taxon>
        <taxon>Xenopus</taxon>
    </lineage>
</organism>
<protein>
    <recommendedName>
        <fullName>Glutamate receptor ionotropic, kainate 2</fullName>
        <shortName>GluK2</shortName>
    </recommendedName>
    <alternativeName>
        <fullName>Glutamate receptor 6</fullName>
        <shortName>GluR-6</shortName>
        <shortName>GluR6</shortName>
    </alternativeName>
</protein>
<keyword id="KW-1003">Cell membrane</keyword>
<keyword id="KW-1015">Disulfide bond</keyword>
<keyword id="KW-0325">Glycoprotein</keyword>
<keyword id="KW-0407">Ion channel</keyword>
<keyword id="KW-0406">Ion transport</keyword>
<keyword id="KW-1071">Ligand-gated ion channel</keyword>
<keyword id="KW-0472">Membrane</keyword>
<keyword id="KW-0628">Postsynaptic cell membrane</keyword>
<keyword id="KW-0675">Receptor</keyword>
<keyword id="KW-1185">Reference proteome</keyword>
<keyword id="KW-0770">Synapse</keyword>
<keyword id="KW-0812">Transmembrane</keyword>
<keyword id="KW-1133">Transmembrane helix</keyword>
<keyword id="KW-0813">Transport</keyword>
<feature type="chain" id="PRO_0000450267" description="Glutamate receptor ionotropic, kainate 2">
    <location>
        <begin position="1"/>
        <end position="913"/>
    </location>
</feature>
<feature type="topological domain" description="Extracellular" evidence="2">
    <location>
        <begin position="1"/>
        <end position="566"/>
    </location>
</feature>
<feature type="transmembrane region" description="Helical" evidence="4">
    <location>
        <begin position="567"/>
        <end position="587"/>
    </location>
</feature>
<feature type="topological domain" description="Cytoplasmic" evidence="2">
    <location>
        <begin position="588"/>
        <end position="643"/>
    </location>
</feature>
<feature type="transmembrane region" description="Helical" evidence="4">
    <location>
        <begin position="644"/>
        <end position="664"/>
    </location>
</feature>
<feature type="topological domain" description="Extracellular" evidence="2">
    <location>
        <begin position="665"/>
        <end position="824"/>
    </location>
</feature>
<feature type="transmembrane region" description="Helical" evidence="4">
    <location>
        <begin position="825"/>
        <end position="845"/>
    </location>
</feature>
<feature type="topological domain" description="Cytoplasmic" evidence="2">
    <location>
        <begin position="846"/>
        <end position="913"/>
    </location>
</feature>
<feature type="binding site" evidence="2">
    <location>
        <position position="521"/>
    </location>
    <ligand>
        <name>L-glutamate</name>
        <dbReference type="ChEBI" id="CHEBI:29985"/>
    </ligand>
</feature>
<feature type="binding site" evidence="2">
    <location>
        <position position="523"/>
    </location>
    <ligand>
        <name>L-glutamate</name>
        <dbReference type="ChEBI" id="CHEBI:29985"/>
    </ligand>
</feature>
<feature type="binding site" evidence="2">
    <location>
        <position position="528"/>
    </location>
    <ligand>
        <name>L-glutamate</name>
        <dbReference type="ChEBI" id="CHEBI:29985"/>
    </ligand>
</feature>
<feature type="binding site" evidence="2">
    <location>
        <position position="694"/>
    </location>
    <ligand>
        <name>L-glutamate</name>
        <dbReference type="ChEBI" id="CHEBI:29985"/>
    </ligand>
</feature>
<feature type="binding site" evidence="2">
    <location>
        <position position="695"/>
    </location>
    <ligand>
        <name>L-glutamate</name>
        <dbReference type="ChEBI" id="CHEBI:29985"/>
    </ligand>
</feature>
<feature type="binding site" evidence="2">
    <location>
        <position position="743"/>
    </location>
    <ligand>
        <name>L-glutamate</name>
        <dbReference type="ChEBI" id="CHEBI:29985"/>
    </ligand>
</feature>
<feature type="glycosylation site" description="N-linked (GlcNAc...) asparagine" evidence="5">
    <location>
        <position position="72"/>
    </location>
</feature>
<feature type="glycosylation site" description="N-linked (GlcNAc...) asparagine" evidence="5">
    <location>
        <position position="78"/>
    </location>
</feature>
<feature type="glycosylation site" description="N-linked (GlcNAc...) asparagine" evidence="5">
    <location>
        <position position="280"/>
    </location>
</feature>
<feature type="glycosylation site" description="N-linked (GlcNAc...) asparagine" evidence="5">
    <location>
        <position position="383"/>
    </location>
</feature>
<feature type="glycosylation site" description="N-linked (GlcNAc...) asparagine" evidence="5">
    <location>
        <position position="417"/>
    </location>
</feature>
<feature type="glycosylation site" description="N-linked (GlcNAc...) asparagine" evidence="5">
    <location>
        <position position="428"/>
    </location>
</feature>
<feature type="glycosylation site" description="N-linked (GlcNAc...) asparagine" evidence="5">
    <location>
        <position position="435"/>
    </location>
</feature>
<feature type="glycosylation site" description="N-linked (GlcNAc...) asparagine" evidence="5">
    <location>
        <position position="551"/>
    </location>
</feature>
<feature type="glycosylation site" description="N-linked (GlcNAc...) asparagine" evidence="5">
    <location>
        <position position="756"/>
    </location>
</feature>
<feature type="disulfide bond" evidence="2">
    <location>
        <begin position="101"/>
        <end position="352"/>
    </location>
</feature>
<feature type="disulfide bond" evidence="3">
    <location>
        <begin position="755"/>
        <end position="809"/>
    </location>
</feature>
<evidence type="ECO:0000250" key="1">
    <source>
        <dbReference type="UniProtKB" id="P39087"/>
    </source>
</evidence>
<evidence type="ECO:0000250" key="2">
    <source>
        <dbReference type="UniProtKB" id="P42260"/>
    </source>
</evidence>
<evidence type="ECO:0000250" key="3">
    <source>
        <dbReference type="UniProtKB" id="Q13002"/>
    </source>
</evidence>
<evidence type="ECO:0000255" key="4"/>
<evidence type="ECO:0000255" key="5">
    <source>
        <dbReference type="PROSITE-ProRule" id="PRU00498"/>
    </source>
</evidence>
<evidence type="ECO:0000305" key="6"/>
<evidence type="ECO:0000312" key="7">
    <source>
        <dbReference type="Proteomes" id="UP000186698"/>
    </source>
</evidence>
<proteinExistence type="evidence at transcript level"/>
<accession>Q91755</accession>
<accession>A0A1L8G3C5</accession>
<gene>
    <name type="primary">grik2</name>
    <name type="synonym">glur6</name>
</gene>
<dbReference type="EMBL" id="CM004475">
    <property type="protein sequence ID" value="OCT78221.1"/>
    <property type="molecule type" value="Genomic_DNA"/>
</dbReference>
<dbReference type="EMBL" id="X94116">
    <property type="protein sequence ID" value="CAA63838.1"/>
    <property type="molecule type" value="mRNA"/>
</dbReference>
<dbReference type="SMR" id="Q91755"/>
<dbReference type="STRING" id="8355.A0A1L8G3C5"/>
<dbReference type="GlyCosmos" id="Q91755">
    <property type="glycosylation" value="9 sites, No reported glycans"/>
</dbReference>
<dbReference type="PaxDb" id="8355-A0A1L8G3C5"/>
<dbReference type="AGR" id="Xenbase:XB-GENE-17345932"/>
<dbReference type="Xenbase" id="XB-GENE-17345932">
    <property type="gene designation" value="grik2.S"/>
</dbReference>
<dbReference type="OMA" id="VNCIASM"/>
<dbReference type="OrthoDB" id="5984008at2759"/>
<dbReference type="Proteomes" id="UP000186698">
    <property type="component" value="Unplaced"/>
</dbReference>
<dbReference type="Proteomes" id="UP000694892">
    <property type="component" value="Chromosome 5S"/>
</dbReference>
<dbReference type="GO" id="GO:0032983">
    <property type="term" value="C:kainate selective glutamate receptor complex"/>
    <property type="evidence" value="ECO:0000318"/>
    <property type="project" value="GO_Central"/>
</dbReference>
<dbReference type="GO" id="GO:0005886">
    <property type="term" value="C:plasma membrane"/>
    <property type="evidence" value="ECO:0000250"/>
    <property type="project" value="UniProtKB"/>
</dbReference>
<dbReference type="GO" id="GO:0098839">
    <property type="term" value="C:postsynaptic density membrane"/>
    <property type="evidence" value="ECO:0000318"/>
    <property type="project" value="GO_Central"/>
</dbReference>
<dbReference type="GO" id="GO:0042734">
    <property type="term" value="C:presynaptic membrane"/>
    <property type="evidence" value="ECO:0000318"/>
    <property type="project" value="GO_Central"/>
</dbReference>
<dbReference type="GO" id="GO:0005234">
    <property type="term" value="F:extracellularly glutamate-gated ion channel activity"/>
    <property type="evidence" value="ECO:0000250"/>
    <property type="project" value="UniProtKB"/>
</dbReference>
<dbReference type="GO" id="GO:0022849">
    <property type="term" value="F:glutamate-gated calcium ion channel activity"/>
    <property type="evidence" value="ECO:0000250"/>
    <property type="project" value="UniProtKB"/>
</dbReference>
<dbReference type="GO" id="GO:0004970">
    <property type="term" value="F:glutamate-gated receptor activity"/>
    <property type="evidence" value="ECO:0000250"/>
    <property type="project" value="UniProtKB"/>
</dbReference>
<dbReference type="GO" id="GO:0015277">
    <property type="term" value="F:kainate selective glutamate receptor activity"/>
    <property type="evidence" value="ECO:0000250"/>
    <property type="project" value="UniProtKB"/>
</dbReference>
<dbReference type="GO" id="GO:1904315">
    <property type="term" value="F:transmitter-gated monoatomic ion channel activity involved in regulation of postsynaptic membrane potential"/>
    <property type="evidence" value="ECO:0000318"/>
    <property type="project" value="GO_Central"/>
</dbReference>
<dbReference type="GO" id="GO:0120169">
    <property type="term" value="P:detection of cold stimulus involved in thermoception"/>
    <property type="evidence" value="ECO:0000250"/>
    <property type="project" value="UniProtKB"/>
</dbReference>
<dbReference type="GO" id="GO:0050804">
    <property type="term" value="P:modulation of chemical synaptic transmission"/>
    <property type="evidence" value="ECO:0000318"/>
    <property type="project" value="GO_Central"/>
</dbReference>
<dbReference type="GO" id="GO:0035249">
    <property type="term" value="P:synaptic transmission, glutamatergic"/>
    <property type="evidence" value="ECO:0000318"/>
    <property type="project" value="GO_Central"/>
</dbReference>
<dbReference type="CDD" id="cd06382">
    <property type="entry name" value="PBP1_iGluR_Kainate"/>
    <property type="match status" value="1"/>
</dbReference>
<dbReference type="FunFam" id="3.40.50.2300:FF:000010">
    <property type="entry name" value="Glutamate ionotropic receptor kainate type subunit 1"/>
    <property type="match status" value="1"/>
</dbReference>
<dbReference type="FunFam" id="3.40.190.10:FF:000240">
    <property type="entry name" value="Glutamate receptor ionotropic, kainate 2"/>
    <property type="match status" value="1"/>
</dbReference>
<dbReference type="FunFam" id="3.40.190.10:FF:000072">
    <property type="entry name" value="glutamate receptor ionotropic, kainate 4"/>
    <property type="match status" value="1"/>
</dbReference>
<dbReference type="FunFam" id="1.10.287.70:FF:000010">
    <property type="entry name" value="Putative glutamate receptor ionotropic kainate 1"/>
    <property type="match status" value="1"/>
</dbReference>
<dbReference type="Gene3D" id="1.10.287.70">
    <property type="match status" value="1"/>
</dbReference>
<dbReference type="Gene3D" id="3.40.50.2300">
    <property type="match status" value="2"/>
</dbReference>
<dbReference type="Gene3D" id="3.40.190.10">
    <property type="entry name" value="Periplasmic binding protein-like II"/>
    <property type="match status" value="1"/>
</dbReference>
<dbReference type="InterPro" id="IPR001828">
    <property type="entry name" value="ANF_lig-bd_rcpt"/>
</dbReference>
<dbReference type="InterPro" id="IPR019594">
    <property type="entry name" value="Glu/Gly-bd"/>
</dbReference>
<dbReference type="InterPro" id="IPR001508">
    <property type="entry name" value="Iono_Glu_rcpt_met"/>
</dbReference>
<dbReference type="InterPro" id="IPR015683">
    <property type="entry name" value="Ionotropic_Glu_rcpt"/>
</dbReference>
<dbReference type="InterPro" id="IPR001320">
    <property type="entry name" value="Iontro_rcpt_C"/>
</dbReference>
<dbReference type="InterPro" id="IPR028082">
    <property type="entry name" value="Peripla_BP_I"/>
</dbReference>
<dbReference type="PANTHER" id="PTHR18966">
    <property type="entry name" value="IONOTROPIC GLUTAMATE RECEPTOR"/>
    <property type="match status" value="1"/>
</dbReference>
<dbReference type="Pfam" id="PF01094">
    <property type="entry name" value="ANF_receptor"/>
    <property type="match status" value="1"/>
</dbReference>
<dbReference type="Pfam" id="PF00060">
    <property type="entry name" value="Lig_chan"/>
    <property type="match status" value="1"/>
</dbReference>
<dbReference type="Pfam" id="PF10613">
    <property type="entry name" value="Lig_chan-Glu_bd"/>
    <property type="match status" value="1"/>
</dbReference>
<dbReference type="PRINTS" id="PR00177">
    <property type="entry name" value="NMDARECEPTOR"/>
</dbReference>
<dbReference type="SMART" id="SM00918">
    <property type="entry name" value="Lig_chan-Glu_bd"/>
    <property type="match status" value="1"/>
</dbReference>
<dbReference type="SMART" id="SM00079">
    <property type="entry name" value="PBPe"/>
    <property type="match status" value="1"/>
</dbReference>
<dbReference type="SUPFAM" id="SSF53822">
    <property type="entry name" value="Periplasmic binding protein-like I"/>
    <property type="match status" value="1"/>
</dbReference>
<dbReference type="SUPFAM" id="SSF53850">
    <property type="entry name" value="Periplasmic binding protein-like II"/>
    <property type="match status" value="1"/>
</dbReference>